<organism>
    <name type="scientific">Salmo salar</name>
    <name type="common">Atlantic salmon</name>
    <dbReference type="NCBI Taxonomy" id="8030"/>
    <lineage>
        <taxon>Eukaryota</taxon>
        <taxon>Metazoa</taxon>
        <taxon>Chordata</taxon>
        <taxon>Craniata</taxon>
        <taxon>Vertebrata</taxon>
        <taxon>Euteleostomi</taxon>
        <taxon>Actinopterygii</taxon>
        <taxon>Neopterygii</taxon>
        <taxon>Teleostei</taxon>
        <taxon>Protacanthopterygii</taxon>
        <taxon>Salmoniformes</taxon>
        <taxon>Salmonidae</taxon>
        <taxon>Salmoninae</taxon>
        <taxon>Salmo</taxon>
    </lineage>
</organism>
<keyword id="KW-0963">Cytoplasm</keyword>
<keyword id="KW-1017">Isopeptide bond</keyword>
<keyword id="KW-0539">Nucleus</keyword>
<keyword id="KW-1185">Reference proteome</keyword>
<keyword id="KW-0832">Ubl conjugation</keyword>
<keyword id="KW-0833">Ubl conjugation pathway</keyword>
<gene>
    <name evidence="1" type="primary">ufm1</name>
</gene>
<proteinExistence type="inferred from homology"/>
<protein>
    <recommendedName>
        <fullName evidence="1">Ubiquitin-fold modifier 1</fullName>
    </recommendedName>
</protein>
<name>UFM1_SALSA</name>
<sequence>MSKVTFKITLTSDPRLPYKVLSVPESTPFTAVLKFAAEEFKVPAATSAIITNDGIGINPAQTAGNVFLKHGSELRIIPRDRVGGRGVGTDRPSSSSSKTQ</sequence>
<reference key="1">
    <citation type="journal article" date="2010" name="BMC Genomics">
        <title>Salmo salar and Esox lucius full-length cDNA sequences reveal changes in evolutionary pressures on a post-tetraploidization genome.</title>
        <authorList>
            <person name="Leong J.S."/>
            <person name="Jantzen S.G."/>
            <person name="von Schalburg K.R."/>
            <person name="Cooper G.A."/>
            <person name="Messmer A.M."/>
            <person name="Liao N.Y."/>
            <person name="Munro S."/>
            <person name="Moore R."/>
            <person name="Holt R.A."/>
            <person name="Jones S.J."/>
            <person name="Davidson W.S."/>
            <person name="Koop B.F."/>
        </authorList>
    </citation>
    <scope>NUCLEOTIDE SEQUENCE [LARGE SCALE MRNA]</scope>
    <source>
        <tissue>Kidney</tissue>
    </source>
</reference>
<accession>B9ENM6</accession>
<evidence type="ECO:0000250" key="1">
    <source>
        <dbReference type="UniProtKB" id="P61960"/>
    </source>
</evidence>
<evidence type="ECO:0000256" key="2">
    <source>
        <dbReference type="SAM" id="MobiDB-lite"/>
    </source>
</evidence>
<evidence type="ECO:0000305" key="3"/>
<feature type="chain" id="PRO_0000391987" description="Ubiquitin-fold modifier 1">
    <location>
        <begin position="1"/>
        <end position="83"/>
    </location>
</feature>
<feature type="propeptide" id="PRO_0000391988" description="Removed in mature form" evidence="1">
    <location>
        <begin position="84"/>
        <end position="100"/>
    </location>
</feature>
<feature type="region of interest" description="Disordered" evidence="2">
    <location>
        <begin position="78"/>
        <end position="100"/>
    </location>
</feature>
<feature type="cross-link" description="Glycyl lysine isopeptide (Lys-Gly) (interchain with G-Cter in UFM1)" evidence="1">
    <location>
        <position position="69"/>
    </location>
</feature>
<feature type="cross-link" description="Glycyl lysine isopeptide (Gly-Lys) (interchain with K-? in acceptor proteins)" evidence="1">
    <location>
        <position position="83"/>
    </location>
</feature>
<dbReference type="EMBL" id="BT057251">
    <property type="protein sequence ID" value="ACM09123.1"/>
    <property type="molecule type" value="mRNA"/>
</dbReference>
<dbReference type="RefSeq" id="NP_001139996.1">
    <property type="nucleotide sequence ID" value="NM_001146524.1"/>
</dbReference>
<dbReference type="SMR" id="B9ENM6"/>
<dbReference type="STRING" id="8030.ENSSSAP00000016813"/>
<dbReference type="PaxDb" id="8030-ENSSSAP00000016813"/>
<dbReference type="Ensembl" id="ENSSSAT00020061556">
    <property type="protein sequence ID" value="ENSSSAP00020048211"/>
    <property type="gene ID" value="ENSSSAG00020026678"/>
</dbReference>
<dbReference type="Ensembl" id="ENSSSAT00070027039">
    <property type="protein sequence ID" value="ENSSSAP00070025890"/>
    <property type="gene ID" value="ENSSSAG00070016906"/>
</dbReference>
<dbReference type="Ensembl" id="ENSSSAT00075041438">
    <property type="protein sequence ID" value="ENSSSAP00075029279"/>
    <property type="gene ID" value="ENSSSAG00075019941"/>
</dbReference>
<dbReference type="GeneID" id="100286585"/>
<dbReference type="KEGG" id="sasa:100286585"/>
<dbReference type="CTD" id="51569"/>
<dbReference type="OrthoDB" id="156999at7898"/>
<dbReference type="Proteomes" id="UP000087266">
    <property type="component" value="Chromosome ssa11"/>
</dbReference>
<dbReference type="Bgee" id="ENSSSAG00000008037">
    <property type="expression patterns" value="Expressed in pituitary gland and 23 other cell types or tissues"/>
</dbReference>
<dbReference type="GO" id="GO:0005737">
    <property type="term" value="C:cytoplasm"/>
    <property type="evidence" value="ECO:0000250"/>
    <property type="project" value="UniProtKB"/>
</dbReference>
<dbReference type="GO" id="GO:0005634">
    <property type="term" value="C:nucleus"/>
    <property type="evidence" value="ECO:0000250"/>
    <property type="project" value="UniProtKB"/>
</dbReference>
<dbReference type="GO" id="GO:1990592">
    <property type="term" value="P:protein K69-linked ufmylation"/>
    <property type="evidence" value="ECO:0000250"/>
    <property type="project" value="UniProtKB"/>
</dbReference>
<dbReference type="GO" id="GO:0071569">
    <property type="term" value="P:protein ufmylation"/>
    <property type="evidence" value="ECO:0000250"/>
    <property type="project" value="UniProtKB"/>
</dbReference>
<dbReference type="GO" id="GO:0034976">
    <property type="term" value="P:response to endoplasmic reticulum stress"/>
    <property type="evidence" value="ECO:0000250"/>
    <property type="project" value="UniProtKB"/>
</dbReference>
<dbReference type="GO" id="GO:0061709">
    <property type="term" value="P:reticulophagy"/>
    <property type="evidence" value="ECO:0000250"/>
    <property type="project" value="UniProtKB"/>
</dbReference>
<dbReference type="CDD" id="cd01766">
    <property type="entry name" value="Ubl_UFM1"/>
    <property type="match status" value="1"/>
</dbReference>
<dbReference type="FunFam" id="3.10.20.90:FF:000044">
    <property type="entry name" value="Ubiquitin-fold modifier 1"/>
    <property type="match status" value="1"/>
</dbReference>
<dbReference type="Gene3D" id="3.10.20.90">
    <property type="entry name" value="Phosphatidylinositol 3-kinase Catalytic Subunit, Chain A, domain 1"/>
    <property type="match status" value="1"/>
</dbReference>
<dbReference type="InterPro" id="IPR029071">
    <property type="entry name" value="Ubiquitin-like_domsf"/>
</dbReference>
<dbReference type="InterPro" id="IPR005375">
    <property type="entry name" value="UFM1"/>
</dbReference>
<dbReference type="PANTHER" id="PTHR15825">
    <property type="entry name" value="UBIQUITIN-FOLD MODIFIER 1"/>
    <property type="match status" value="1"/>
</dbReference>
<dbReference type="PANTHER" id="PTHR15825:SF0">
    <property type="entry name" value="UBIQUITIN-FOLD MODIFIER 1"/>
    <property type="match status" value="1"/>
</dbReference>
<dbReference type="Pfam" id="PF03671">
    <property type="entry name" value="Ufm1"/>
    <property type="match status" value="1"/>
</dbReference>
<dbReference type="PIRSF" id="PIRSF038027">
    <property type="entry name" value="Ubiquitin-like_Ufm1"/>
    <property type="match status" value="1"/>
</dbReference>
<dbReference type="SUPFAM" id="SSF54236">
    <property type="entry name" value="Ubiquitin-like"/>
    <property type="match status" value="1"/>
</dbReference>
<comment type="function">
    <text evidence="1">Ubiquitin-like modifier which can be covalently attached via an isopeptide bond to lysine residues of substrate proteins as a monomer or a lysine-linked polymer. The so-called ufmylation, requires the ufm1-activating E1 enzyme uba5, the ufm1-conjugating E2 enzyme ufc1, and the ufm1-ligase E3 enzyme ufl1. Ufmylation is involved in various processes, such as ribosome recycling, response to DNA damage, transcription or reticulophagy (also called ER-phagy) induced in response to endoplasmic reticulum stress.</text>
</comment>
<comment type="subunit">
    <text evidence="1">Interacts with uba5. Interacts with ufc1.</text>
</comment>
<comment type="subcellular location">
    <subcellularLocation>
        <location evidence="1">Nucleus</location>
    </subcellularLocation>
    <subcellularLocation>
        <location evidence="1">Cytoplasm</location>
    </subcellularLocation>
</comment>
<comment type="PTM">
    <text evidence="1">UFM1 precursor is cleaved by UFSP1, promoting its maturation: processing of the C-terminal Ser-Cys dipeptide is required to expose its C-terminal conserved Gly residue.</text>
</comment>
<comment type="similarity">
    <text evidence="3">Belongs to the UFM1 family.</text>
</comment>